<feature type="chain" id="PRO_1000091332" description="Leucine--tRNA ligase">
    <location>
        <begin position="1"/>
        <end position="867"/>
    </location>
</feature>
<feature type="short sequence motif" description="'HIGH' region">
    <location>
        <begin position="40"/>
        <end position="51"/>
    </location>
</feature>
<feature type="short sequence motif" description="'KMSKS' region">
    <location>
        <begin position="638"/>
        <end position="642"/>
    </location>
</feature>
<feature type="binding site" evidence="1">
    <location>
        <position position="641"/>
    </location>
    <ligand>
        <name>ATP</name>
        <dbReference type="ChEBI" id="CHEBI:30616"/>
    </ligand>
</feature>
<comment type="catalytic activity">
    <reaction evidence="1">
        <text>tRNA(Leu) + L-leucine + ATP = L-leucyl-tRNA(Leu) + AMP + diphosphate</text>
        <dbReference type="Rhea" id="RHEA:11688"/>
        <dbReference type="Rhea" id="RHEA-COMP:9613"/>
        <dbReference type="Rhea" id="RHEA-COMP:9622"/>
        <dbReference type="ChEBI" id="CHEBI:30616"/>
        <dbReference type="ChEBI" id="CHEBI:33019"/>
        <dbReference type="ChEBI" id="CHEBI:57427"/>
        <dbReference type="ChEBI" id="CHEBI:78442"/>
        <dbReference type="ChEBI" id="CHEBI:78494"/>
        <dbReference type="ChEBI" id="CHEBI:456215"/>
        <dbReference type="EC" id="6.1.1.4"/>
    </reaction>
</comment>
<comment type="subcellular location">
    <subcellularLocation>
        <location evidence="1">Cytoplasm</location>
    </subcellularLocation>
</comment>
<comment type="similarity">
    <text evidence="1">Belongs to the class-I aminoacyl-tRNA synthetase family.</text>
</comment>
<name>SYL_LEPBP</name>
<organism>
    <name type="scientific">Leptospira biflexa serovar Patoc (strain Patoc 1 / ATCC 23582 / Paris)</name>
    <dbReference type="NCBI Taxonomy" id="456481"/>
    <lineage>
        <taxon>Bacteria</taxon>
        <taxon>Pseudomonadati</taxon>
        <taxon>Spirochaetota</taxon>
        <taxon>Spirochaetia</taxon>
        <taxon>Leptospirales</taxon>
        <taxon>Leptospiraceae</taxon>
        <taxon>Leptospira</taxon>
    </lineage>
</organism>
<reference key="1">
    <citation type="journal article" date="2008" name="PLoS ONE">
        <title>Genome sequence of the saprophyte Leptospira biflexa provides insights into the evolution of Leptospira and the pathogenesis of leptospirosis.</title>
        <authorList>
            <person name="Picardeau M."/>
            <person name="Bulach D.M."/>
            <person name="Bouchier C."/>
            <person name="Zuerner R.L."/>
            <person name="Zidane N."/>
            <person name="Wilson P.J."/>
            <person name="Creno S."/>
            <person name="Kuczek E.S."/>
            <person name="Bommezzadri S."/>
            <person name="Davis J.C."/>
            <person name="McGrath A."/>
            <person name="Johnson M.J."/>
            <person name="Boursaux-Eude C."/>
            <person name="Seemann T."/>
            <person name="Rouy Z."/>
            <person name="Coppel R.L."/>
            <person name="Rood J.I."/>
            <person name="Lajus A."/>
            <person name="Davies J.K."/>
            <person name="Medigue C."/>
            <person name="Adler B."/>
        </authorList>
    </citation>
    <scope>NUCLEOTIDE SEQUENCE [LARGE SCALE GENOMIC DNA]</scope>
    <source>
        <strain>Patoc 1 / ATCC 23582 / Paris</strain>
    </source>
</reference>
<evidence type="ECO:0000255" key="1">
    <source>
        <dbReference type="HAMAP-Rule" id="MF_00049"/>
    </source>
</evidence>
<sequence length="867" mass="99943">MNYPFQDIEQKWQKYWDHHQTFRTNTHSSKPKYYCLDMFPYPSGAGLHVGHPEGYTATDIISRLKRMEGYEVLHPMGWDAFGLPAERYAMTTGIHPRTTTKNNIDTFRRQIKSLGLSYDWEREISTTHPDYYRWTQWIFLQIYNSYFDRKQNKAVPITTLIQTLEREGSLFFEGVELPKGIQFTASEWKSKSRKEKEDILSHFRLVYEANIPVNWCEALGTVLANEEVEEWTSKGYSVERKPMRQYMMRITAYAERLLNDLSLCEWPPSTLEMQRNWIGKSEGLELSFHVPSLNKDITVYTTRPDTIFGATYLVLAPEHALVAELTTPEQTEAVGQYQKDCSLKSDLERTELNKDKTGVFTGAYAQLPTDPSVKVPIYISDYVLISYGTGAIMAVPAHDQRDYDFAVKFNLPIKQVIDGKMETNLAFDSKDSVCINSSSAEVQLDGKSYKDAFQTMVVWAEKKGIGRKKIQFKLRDWLFARQRYWGEPIPLVHFEDGSPKALSDSELPLVLPDLEEFKPSGTGESPLALAKDWLVYKDPETGEIGKRETNTMPQWAGSCYYYLRYIDPRNNDKLIDPELEKMWMPVEVYVGGAEHAVLHLLYSRFWHKILFDLGHVSTPEPFKKLVHQGLILGEDKGKMSKSRGNVVNPDDVVSEFGADTLRLFEMFMGPFEMSKPWSKNGVDGVFRFLNRVWRLFHSGENESFFVEDIEPNEAEQKTLHRTIKKVKDDIDSFSFNTAVSQMMIFINEFTSNPRKPKQVLEPFVLALSPFAPHLAEELWAKLGHTDSLAYHPYPKWDEKYLIDANITIVVQVNGKMRGEFLAPREIEEKEALSLAKEVEKAKPFWVGKEIKKEIYVKGKLVNIVVAG</sequence>
<accession>B0STJ3</accession>
<proteinExistence type="inferred from homology"/>
<gene>
    <name evidence="1" type="primary">leuS</name>
    <name type="ordered locus">LEPBI_I0262</name>
</gene>
<keyword id="KW-0030">Aminoacyl-tRNA synthetase</keyword>
<keyword id="KW-0067">ATP-binding</keyword>
<keyword id="KW-0963">Cytoplasm</keyword>
<keyword id="KW-0436">Ligase</keyword>
<keyword id="KW-0547">Nucleotide-binding</keyword>
<keyword id="KW-0648">Protein biosynthesis</keyword>
<keyword id="KW-1185">Reference proteome</keyword>
<dbReference type="EC" id="6.1.1.4" evidence="1"/>
<dbReference type="EMBL" id="CP000786">
    <property type="protein sequence ID" value="ABZ96407.1"/>
    <property type="molecule type" value="Genomic_DNA"/>
</dbReference>
<dbReference type="RefSeq" id="WP_012387295.1">
    <property type="nucleotide sequence ID" value="NC_010602.1"/>
</dbReference>
<dbReference type="SMR" id="B0STJ3"/>
<dbReference type="STRING" id="456481.LEPBI_I0262"/>
<dbReference type="KEGG" id="lbi:LEPBI_I0262"/>
<dbReference type="HOGENOM" id="CLU_004427_0_0_12"/>
<dbReference type="OrthoDB" id="9810365at2"/>
<dbReference type="BioCyc" id="LBIF456481:LEPBI_RS01285-MONOMER"/>
<dbReference type="Proteomes" id="UP000001847">
    <property type="component" value="Chromosome I"/>
</dbReference>
<dbReference type="GO" id="GO:0005829">
    <property type="term" value="C:cytosol"/>
    <property type="evidence" value="ECO:0007669"/>
    <property type="project" value="TreeGrafter"/>
</dbReference>
<dbReference type="GO" id="GO:0002161">
    <property type="term" value="F:aminoacyl-tRNA deacylase activity"/>
    <property type="evidence" value="ECO:0007669"/>
    <property type="project" value="InterPro"/>
</dbReference>
<dbReference type="GO" id="GO:0005524">
    <property type="term" value="F:ATP binding"/>
    <property type="evidence" value="ECO:0007669"/>
    <property type="project" value="UniProtKB-UniRule"/>
</dbReference>
<dbReference type="GO" id="GO:0004823">
    <property type="term" value="F:leucine-tRNA ligase activity"/>
    <property type="evidence" value="ECO:0007669"/>
    <property type="project" value="UniProtKB-UniRule"/>
</dbReference>
<dbReference type="GO" id="GO:0006429">
    <property type="term" value="P:leucyl-tRNA aminoacylation"/>
    <property type="evidence" value="ECO:0007669"/>
    <property type="project" value="UniProtKB-UniRule"/>
</dbReference>
<dbReference type="CDD" id="cd07958">
    <property type="entry name" value="Anticodon_Ia_Leu_BEm"/>
    <property type="match status" value="1"/>
</dbReference>
<dbReference type="FunFam" id="1.10.730.10:FF:000012">
    <property type="entry name" value="Leucine--tRNA ligase"/>
    <property type="match status" value="1"/>
</dbReference>
<dbReference type="FunFam" id="3.40.50.620:FF:000056">
    <property type="entry name" value="Leucine--tRNA ligase"/>
    <property type="match status" value="1"/>
</dbReference>
<dbReference type="FunFam" id="3.40.50.620:FF:000060">
    <property type="entry name" value="Leucine--tRNA ligase"/>
    <property type="match status" value="1"/>
</dbReference>
<dbReference type="FunFam" id="1.10.730.10:FF:000011">
    <property type="entry name" value="Leucine--tRNA ligase chloroplastic/mitochondrial"/>
    <property type="match status" value="1"/>
</dbReference>
<dbReference type="Gene3D" id="3.10.20.590">
    <property type="match status" value="1"/>
</dbReference>
<dbReference type="Gene3D" id="3.40.50.620">
    <property type="entry name" value="HUPs"/>
    <property type="match status" value="3"/>
</dbReference>
<dbReference type="Gene3D" id="1.10.730.10">
    <property type="entry name" value="Isoleucyl-tRNA Synthetase, Domain 1"/>
    <property type="match status" value="1"/>
</dbReference>
<dbReference type="HAMAP" id="MF_00049_B">
    <property type="entry name" value="Leu_tRNA_synth_B"/>
    <property type="match status" value="1"/>
</dbReference>
<dbReference type="InterPro" id="IPR001412">
    <property type="entry name" value="aa-tRNA-synth_I_CS"/>
</dbReference>
<dbReference type="InterPro" id="IPR002300">
    <property type="entry name" value="aa-tRNA-synth_Ia"/>
</dbReference>
<dbReference type="InterPro" id="IPR002302">
    <property type="entry name" value="Leu-tRNA-ligase"/>
</dbReference>
<dbReference type="InterPro" id="IPR025709">
    <property type="entry name" value="Leu_tRNA-synth_edit"/>
</dbReference>
<dbReference type="InterPro" id="IPR013155">
    <property type="entry name" value="M/V/L/I-tRNA-synth_anticd-bd"/>
</dbReference>
<dbReference type="InterPro" id="IPR014729">
    <property type="entry name" value="Rossmann-like_a/b/a_fold"/>
</dbReference>
<dbReference type="InterPro" id="IPR009080">
    <property type="entry name" value="tRNAsynth_Ia_anticodon-bd"/>
</dbReference>
<dbReference type="InterPro" id="IPR009008">
    <property type="entry name" value="Val/Leu/Ile-tRNA-synth_edit"/>
</dbReference>
<dbReference type="NCBIfam" id="TIGR00396">
    <property type="entry name" value="leuS_bact"/>
    <property type="match status" value="1"/>
</dbReference>
<dbReference type="PANTHER" id="PTHR43740:SF2">
    <property type="entry name" value="LEUCINE--TRNA LIGASE, MITOCHONDRIAL"/>
    <property type="match status" value="1"/>
</dbReference>
<dbReference type="PANTHER" id="PTHR43740">
    <property type="entry name" value="LEUCYL-TRNA SYNTHETASE"/>
    <property type="match status" value="1"/>
</dbReference>
<dbReference type="Pfam" id="PF08264">
    <property type="entry name" value="Anticodon_1"/>
    <property type="match status" value="1"/>
</dbReference>
<dbReference type="Pfam" id="PF00133">
    <property type="entry name" value="tRNA-synt_1"/>
    <property type="match status" value="2"/>
</dbReference>
<dbReference type="Pfam" id="PF13603">
    <property type="entry name" value="tRNA-synt_1_2"/>
    <property type="match status" value="1"/>
</dbReference>
<dbReference type="PRINTS" id="PR00985">
    <property type="entry name" value="TRNASYNTHLEU"/>
</dbReference>
<dbReference type="SUPFAM" id="SSF47323">
    <property type="entry name" value="Anticodon-binding domain of a subclass of class I aminoacyl-tRNA synthetases"/>
    <property type="match status" value="1"/>
</dbReference>
<dbReference type="SUPFAM" id="SSF52374">
    <property type="entry name" value="Nucleotidylyl transferase"/>
    <property type="match status" value="1"/>
</dbReference>
<dbReference type="SUPFAM" id="SSF50677">
    <property type="entry name" value="ValRS/IleRS/LeuRS editing domain"/>
    <property type="match status" value="1"/>
</dbReference>
<dbReference type="PROSITE" id="PS00178">
    <property type="entry name" value="AA_TRNA_LIGASE_I"/>
    <property type="match status" value="1"/>
</dbReference>
<protein>
    <recommendedName>
        <fullName evidence="1">Leucine--tRNA ligase</fullName>
        <ecNumber evidence="1">6.1.1.4</ecNumber>
    </recommendedName>
    <alternativeName>
        <fullName evidence="1">Leucyl-tRNA synthetase</fullName>
        <shortName evidence="1">LeuRS</shortName>
    </alternativeName>
</protein>